<name>RS5_NITMU</name>
<protein>
    <recommendedName>
        <fullName evidence="1">Small ribosomal subunit protein uS5</fullName>
    </recommendedName>
    <alternativeName>
        <fullName evidence="3">30S ribosomal protein S5</fullName>
    </alternativeName>
</protein>
<comment type="function">
    <text evidence="1">With S4 and S12 plays an important role in translational accuracy.</text>
</comment>
<comment type="function">
    <text evidence="1">Located at the back of the 30S subunit body where it stabilizes the conformation of the head with respect to the body.</text>
</comment>
<comment type="subunit">
    <text evidence="1">Part of the 30S ribosomal subunit. Contacts proteins S4 and S8.</text>
</comment>
<comment type="domain">
    <text>The N-terminal domain interacts with the head of the 30S subunit; the C-terminal domain interacts with the body and contacts protein S4. The interaction surface between S4 and S5 is involved in control of translational fidelity.</text>
</comment>
<comment type="similarity">
    <text evidence="1">Belongs to the universal ribosomal protein uS5 family.</text>
</comment>
<organism>
    <name type="scientific">Nitrosospira multiformis (strain ATCC 25196 / NCIMB 11849 / C 71)</name>
    <dbReference type="NCBI Taxonomy" id="323848"/>
    <lineage>
        <taxon>Bacteria</taxon>
        <taxon>Pseudomonadati</taxon>
        <taxon>Pseudomonadota</taxon>
        <taxon>Betaproteobacteria</taxon>
        <taxon>Nitrosomonadales</taxon>
        <taxon>Nitrosomonadaceae</taxon>
        <taxon>Nitrosospira</taxon>
    </lineage>
</organism>
<reference key="1">
    <citation type="submission" date="2005-08" db="EMBL/GenBank/DDBJ databases">
        <title>Complete sequence of chromosome 1 of Nitrosospira multiformis ATCC 25196.</title>
        <authorList>
            <person name="Copeland A."/>
            <person name="Lucas S."/>
            <person name="Lapidus A."/>
            <person name="Barry K."/>
            <person name="Detter J.C."/>
            <person name="Glavina T."/>
            <person name="Hammon N."/>
            <person name="Israni S."/>
            <person name="Pitluck S."/>
            <person name="Chain P."/>
            <person name="Malfatti S."/>
            <person name="Shin M."/>
            <person name="Vergez L."/>
            <person name="Schmutz J."/>
            <person name="Larimer F."/>
            <person name="Land M."/>
            <person name="Hauser L."/>
            <person name="Kyrpides N."/>
            <person name="Lykidis A."/>
            <person name="Richardson P."/>
        </authorList>
    </citation>
    <scope>NUCLEOTIDE SEQUENCE [LARGE SCALE GENOMIC DNA]</scope>
    <source>
        <strain>ATCC 25196 / NCIMB 11849 / C 71</strain>
    </source>
</reference>
<keyword id="KW-1185">Reference proteome</keyword>
<keyword id="KW-0687">Ribonucleoprotein</keyword>
<keyword id="KW-0689">Ribosomal protein</keyword>
<keyword id="KW-0694">RNA-binding</keyword>
<keyword id="KW-0699">rRNA-binding</keyword>
<feature type="chain" id="PRO_0000230353" description="Small ribosomal subunit protein uS5">
    <location>
        <begin position="1"/>
        <end position="180"/>
    </location>
</feature>
<feature type="domain" description="S5 DRBM" evidence="1">
    <location>
        <begin position="22"/>
        <end position="85"/>
    </location>
</feature>
<feature type="region of interest" description="Disordered" evidence="2">
    <location>
        <begin position="1"/>
        <end position="20"/>
    </location>
</feature>
<dbReference type="EMBL" id="CP000103">
    <property type="protein sequence ID" value="ABB74091.1"/>
    <property type="molecule type" value="Genomic_DNA"/>
</dbReference>
<dbReference type="RefSeq" id="WP_011380140.1">
    <property type="nucleotide sequence ID" value="NC_007614.1"/>
</dbReference>
<dbReference type="SMR" id="Q2YAY0"/>
<dbReference type="STRING" id="323848.Nmul_A0784"/>
<dbReference type="KEGG" id="nmu:Nmul_A0784"/>
<dbReference type="eggNOG" id="COG0098">
    <property type="taxonomic scope" value="Bacteria"/>
</dbReference>
<dbReference type="HOGENOM" id="CLU_065898_2_2_4"/>
<dbReference type="OrthoDB" id="9809045at2"/>
<dbReference type="Proteomes" id="UP000002718">
    <property type="component" value="Chromosome"/>
</dbReference>
<dbReference type="GO" id="GO:0015935">
    <property type="term" value="C:small ribosomal subunit"/>
    <property type="evidence" value="ECO:0007669"/>
    <property type="project" value="InterPro"/>
</dbReference>
<dbReference type="GO" id="GO:0019843">
    <property type="term" value="F:rRNA binding"/>
    <property type="evidence" value="ECO:0007669"/>
    <property type="project" value="UniProtKB-UniRule"/>
</dbReference>
<dbReference type="GO" id="GO:0003735">
    <property type="term" value="F:structural constituent of ribosome"/>
    <property type="evidence" value="ECO:0007669"/>
    <property type="project" value="InterPro"/>
</dbReference>
<dbReference type="GO" id="GO:0006412">
    <property type="term" value="P:translation"/>
    <property type="evidence" value="ECO:0007669"/>
    <property type="project" value="UniProtKB-UniRule"/>
</dbReference>
<dbReference type="FunFam" id="3.30.160.20:FF:000001">
    <property type="entry name" value="30S ribosomal protein S5"/>
    <property type="match status" value="1"/>
</dbReference>
<dbReference type="FunFam" id="3.30.230.10:FF:000002">
    <property type="entry name" value="30S ribosomal protein S5"/>
    <property type="match status" value="1"/>
</dbReference>
<dbReference type="Gene3D" id="3.30.160.20">
    <property type="match status" value="1"/>
</dbReference>
<dbReference type="Gene3D" id="3.30.230.10">
    <property type="match status" value="1"/>
</dbReference>
<dbReference type="HAMAP" id="MF_01307_B">
    <property type="entry name" value="Ribosomal_uS5_B"/>
    <property type="match status" value="1"/>
</dbReference>
<dbReference type="InterPro" id="IPR020568">
    <property type="entry name" value="Ribosomal_Su5_D2-typ_SF"/>
</dbReference>
<dbReference type="InterPro" id="IPR000851">
    <property type="entry name" value="Ribosomal_uS5"/>
</dbReference>
<dbReference type="InterPro" id="IPR005712">
    <property type="entry name" value="Ribosomal_uS5_bac-type"/>
</dbReference>
<dbReference type="InterPro" id="IPR005324">
    <property type="entry name" value="Ribosomal_uS5_C"/>
</dbReference>
<dbReference type="InterPro" id="IPR013810">
    <property type="entry name" value="Ribosomal_uS5_N"/>
</dbReference>
<dbReference type="InterPro" id="IPR018192">
    <property type="entry name" value="Ribosomal_uS5_N_CS"/>
</dbReference>
<dbReference type="InterPro" id="IPR014721">
    <property type="entry name" value="Ribsml_uS5_D2-typ_fold_subgr"/>
</dbReference>
<dbReference type="NCBIfam" id="TIGR01021">
    <property type="entry name" value="rpsE_bact"/>
    <property type="match status" value="1"/>
</dbReference>
<dbReference type="PANTHER" id="PTHR48432">
    <property type="entry name" value="S5 DRBM DOMAIN-CONTAINING PROTEIN"/>
    <property type="match status" value="1"/>
</dbReference>
<dbReference type="PANTHER" id="PTHR48432:SF1">
    <property type="entry name" value="S5 DRBM DOMAIN-CONTAINING PROTEIN"/>
    <property type="match status" value="1"/>
</dbReference>
<dbReference type="Pfam" id="PF00333">
    <property type="entry name" value="Ribosomal_S5"/>
    <property type="match status" value="1"/>
</dbReference>
<dbReference type="Pfam" id="PF03719">
    <property type="entry name" value="Ribosomal_S5_C"/>
    <property type="match status" value="1"/>
</dbReference>
<dbReference type="SUPFAM" id="SSF54768">
    <property type="entry name" value="dsRNA-binding domain-like"/>
    <property type="match status" value="1"/>
</dbReference>
<dbReference type="SUPFAM" id="SSF54211">
    <property type="entry name" value="Ribosomal protein S5 domain 2-like"/>
    <property type="match status" value="1"/>
</dbReference>
<dbReference type="PROSITE" id="PS00585">
    <property type="entry name" value="RIBOSOMAL_S5"/>
    <property type="match status" value="1"/>
</dbReference>
<dbReference type="PROSITE" id="PS50881">
    <property type="entry name" value="S5_DSRBD"/>
    <property type="match status" value="1"/>
</dbReference>
<accession>Q2YAY0</accession>
<evidence type="ECO:0000255" key="1">
    <source>
        <dbReference type="HAMAP-Rule" id="MF_01307"/>
    </source>
</evidence>
<evidence type="ECO:0000256" key="2">
    <source>
        <dbReference type="SAM" id="MobiDB-lite"/>
    </source>
</evidence>
<evidence type="ECO:0000305" key="3"/>
<proteinExistence type="inferred from homology"/>
<sequence length="180" mass="18872">MAKMQGRMQGKVAPGDDRGDGLKEKMVAINRVTKVVKGGRILGFAALTVVGNGDGGVGMGKGKSREVPVAVQKAMDEARRKMIKVSLKNGTLQHPVIGRHGAAKVYMQPASEGTGIIAGGPMRAIFEVMGVHNILAKCIGSTNPYNVVRATLNGLQAMSNPAEIAAKRGKSVEEILGLEK</sequence>
<gene>
    <name evidence="1" type="primary">rpsE</name>
    <name type="ordered locus">Nmul_A0784</name>
</gene>